<organism>
    <name type="scientific">Arabidopsis thaliana</name>
    <name type="common">Mouse-ear cress</name>
    <dbReference type="NCBI Taxonomy" id="3702"/>
    <lineage>
        <taxon>Eukaryota</taxon>
        <taxon>Viridiplantae</taxon>
        <taxon>Streptophyta</taxon>
        <taxon>Embryophyta</taxon>
        <taxon>Tracheophyta</taxon>
        <taxon>Spermatophyta</taxon>
        <taxon>Magnoliopsida</taxon>
        <taxon>eudicotyledons</taxon>
        <taxon>Gunneridae</taxon>
        <taxon>Pentapetalae</taxon>
        <taxon>rosids</taxon>
        <taxon>malvids</taxon>
        <taxon>Brassicales</taxon>
        <taxon>Brassicaceae</taxon>
        <taxon>Camelineae</taxon>
        <taxon>Arabidopsis</taxon>
    </lineage>
</organism>
<comment type="function">
    <text evidence="1">Involved in vesicular protein trafficking. Mainly functions in the early secretory pathway. Thought to act as cargo receptor at the lumenal side for incorporation of secretory cargo molecules into transport vesicles and to be involved in vesicle coat formation at the cytoplasmic side (By similarity).</text>
</comment>
<comment type="subunit">
    <text evidence="1">Probably oligomerizes with other members of the EMP24/GP25L family. Associates with the COPI vesicle coat (coatomer). Associates with the COPII vesicle coat (coatomer).</text>
</comment>
<comment type="subcellular location">
    <subcellularLocation>
        <location evidence="4">Endoplasmic reticulum membrane</location>
        <topology evidence="4">Single-pass type I membrane protein</topology>
    </subcellularLocation>
    <text evidence="1">Cycles between the endoplasmic reticulum and Golgi via COPI and COPII dependent pathways (By similarity). Mainly located in endoplasmic reticulum.</text>
</comment>
<comment type="domain">
    <text evidence="1">The cytoplasmic C-terminal domain contains a functional dilysine-retrieval motif, which is involved in the retrograde Golgi-to-ER transport of the protein.</text>
</comment>
<comment type="similarity">
    <text evidence="5">Belongs to the EMP24/GP25L family.</text>
</comment>
<comment type="sequence caution" evidence="5">
    <conflict type="erroneous gene model prediction">
        <sequence resource="EMBL-CDS" id="AAF19571"/>
    </conflict>
</comment>
<accession>F4J4Y0</accession>
<accession>Q9SG84</accession>
<proteinExistence type="evidence at protein level"/>
<keyword id="KW-0175">Coiled coil</keyword>
<keyword id="KW-0256">Endoplasmic reticulum</keyword>
<keyword id="KW-0931">ER-Golgi transport</keyword>
<keyword id="KW-0325">Glycoprotein</keyword>
<keyword id="KW-0472">Membrane</keyword>
<keyword id="KW-0488">Methylation</keyword>
<keyword id="KW-0653">Protein transport</keyword>
<keyword id="KW-1185">Reference proteome</keyword>
<keyword id="KW-0732">Signal</keyword>
<keyword id="KW-0812">Transmembrane</keyword>
<keyword id="KW-1133">Transmembrane helix</keyword>
<keyword id="KW-0813">Transport</keyword>
<dbReference type="EMBL" id="AC011708">
    <property type="protein sequence ID" value="AAF19571.1"/>
    <property type="status" value="ALT_SEQ"/>
    <property type="molecule type" value="Genomic_DNA"/>
</dbReference>
<dbReference type="EMBL" id="CP002686">
    <property type="protein sequence ID" value="AEE74954.1"/>
    <property type="molecule type" value="Genomic_DNA"/>
</dbReference>
<dbReference type="RefSeq" id="NP_187689.2">
    <property type="nucleotide sequence ID" value="NM_111915.3"/>
</dbReference>
<dbReference type="SMR" id="F4J4Y0"/>
<dbReference type="FunCoup" id="F4J4Y0">
    <property type="interactions" value="3735"/>
</dbReference>
<dbReference type="STRING" id="3702.F4J4Y0"/>
<dbReference type="GlyGen" id="F4J4Y0">
    <property type="glycosylation" value="2 sites"/>
</dbReference>
<dbReference type="PaxDb" id="3702-AT3G10780.1"/>
<dbReference type="ProteomicsDB" id="248785"/>
<dbReference type="EnsemblPlants" id="AT3G10780.1">
    <property type="protein sequence ID" value="AT3G10780.1"/>
    <property type="gene ID" value="AT3G10780"/>
</dbReference>
<dbReference type="GeneID" id="820247"/>
<dbReference type="Gramene" id="AT3G10780.1">
    <property type="protein sequence ID" value="AT3G10780.1"/>
    <property type="gene ID" value="AT3G10780"/>
</dbReference>
<dbReference type="KEGG" id="ath:AT3G10780"/>
<dbReference type="Araport" id="AT3G10780"/>
<dbReference type="TAIR" id="AT3G10780"/>
<dbReference type="eggNOG" id="KOG1691">
    <property type="taxonomic scope" value="Eukaryota"/>
</dbReference>
<dbReference type="HOGENOM" id="CLU_066963_3_2_1"/>
<dbReference type="InParanoid" id="F4J4Y0"/>
<dbReference type="OMA" id="AYMREIN"/>
<dbReference type="PRO" id="PR:F4J4Y0"/>
<dbReference type="Proteomes" id="UP000006548">
    <property type="component" value="Chromosome 3"/>
</dbReference>
<dbReference type="ExpressionAtlas" id="F4J4Y0">
    <property type="expression patterns" value="baseline and differential"/>
</dbReference>
<dbReference type="GO" id="GO:0005789">
    <property type="term" value="C:endoplasmic reticulum membrane"/>
    <property type="evidence" value="ECO:0007669"/>
    <property type="project" value="UniProtKB-SubCell"/>
</dbReference>
<dbReference type="GO" id="GO:0015031">
    <property type="term" value="P:protein transport"/>
    <property type="evidence" value="ECO:0007669"/>
    <property type="project" value="UniProtKB-KW"/>
</dbReference>
<dbReference type="GO" id="GO:0016192">
    <property type="term" value="P:vesicle-mediated transport"/>
    <property type="evidence" value="ECO:0007669"/>
    <property type="project" value="UniProtKB-KW"/>
</dbReference>
<dbReference type="InterPro" id="IPR015720">
    <property type="entry name" value="Emp24-like"/>
</dbReference>
<dbReference type="InterPro" id="IPR009038">
    <property type="entry name" value="GOLD_dom"/>
</dbReference>
<dbReference type="PANTHER" id="PTHR22811">
    <property type="entry name" value="TRANSMEMBRANE EMP24 DOMAIN-CONTAINING PROTEIN"/>
    <property type="match status" value="1"/>
</dbReference>
<dbReference type="Pfam" id="PF01105">
    <property type="entry name" value="EMP24_GP25L"/>
    <property type="match status" value="1"/>
</dbReference>
<dbReference type="SMART" id="SM01190">
    <property type="entry name" value="EMP24_GP25L"/>
    <property type="match status" value="1"/>
</dbReference>
<dbReference type="PROSITE" id="PS50866">
    <property type="entry name" value="GOLD"/>
    <property type="match status" value="1"/>
</dbReference>
<gene>
    <name type="ordered locus">At3g10780</name>
    <name type="ORF">T7M13.14</name>
</gene>
<name>P24D6_ARATH</name>
<reference key="1">
    <citation type="journal article" date="2000" name="Nature">
        <title>Sequence and analysis of chromosome 3 of the plant Arabidopsis thaliana.</title>
        <authorList>
            <person name="Salanoubat M."/>
            <person name="Lemcke K."/>
            <person name="Rieger M."/>
            <person name="Ansorge W."/>
            <person name="Unseld M."/>
            <person name="Fartmann B."/>
            <person name="Valle G."/>
            <person name="Bloecker H."/>
            <person name="Perez-Alonso M."/>
            <person name="Obermaier B."/>
            <person name="Delseny M."/>
            <person name="Boutry M."/>
            <person name="Grivell L.A."/>
            <person name="Mache R."/>
            <person name="Puigdomenech P."/>
            <person name="De Simone V."/>
            <person name="Choisne N."/>
            <person name="Artiguenave F."/>
            <person name="Robert C."/>
            <person name="Brottier P."/>
            <person name="Wincker P."/>
            <person name="Cattolico L."/>
            <person name="Weissenbach J."/>
            <person name="Saurin W."/>
            <person name="Quetier F."/>
            <person name="Schaefer M."/>
            <person name="Mueller-Auer S."/>
            <person name="Gabel C."/>
            <person name="Fuchs M."/>
            <person name="Benes V."/>
            <person name="Wurmbach E."/>
            <person name="Drzonek H."/>
            <person name="Erfle H."/>
            <person name="Jordan N."/>
            <person name="Bangert S."/>
            <person name="Wiedelmann R."/>
            <person name="Kranz H."/>
            <person name="Voss H."/>
            <person name="Holland R."/>
            <person name="Brandt P."/>
            <person name="Nyakatura G."/>
            <person name="Vezzi A."/>
            <person name="D'Angelo M."/>
            <person name="Pallavicini A."/>
            <person name="Toppo S."/>
            <person name="Simionati B."/>
            <person name="Conrad A."/>
            <person name="Hornischer K."/>
            <person name="Kauer G."/>
            <person name="Loehnert T.-H."/>
            <person name="Nordsiek G."/>
            <person name="Reichelt J."/>
            <person name="Scharfe M."/>
            <person name="Schoen O."/>
            <person name="Bargues M."/>
            <person name="Terol J."/>
            <person name="Climent J."/>
            <person name="Navarro P."/>
            <person name="Collado C."/>
            <person name="Perez-Perez A."/>
            <person name="Ottenwaelder B."/>
            <person name="Duchemin D."/>
            <person name="Cooke R."/>
            <person name="Laudie M."/>
            <person name="Berger-Llauro C."/>
            <person name="Purnelle B."/>
            <person name="Masuy D."/>
            <person name="de Haan M."/>
            <person name="Maarse A.C."/>
            <person name="Alcaraz J.-P."/>
            <person name="Cottet A."/>
            <person name="Casacuberta E."/>
            <person name="Monfort A."/>
            <person name="Argiriou A."/>
            <person name="Flores M."/>
            <person name="Liguori R."/>
            <person name="Vitale D."/>
            <person name="Mannhaupt G."/>
            <person name="Haase D."/>
            <person name="Schoof H."/>
            <person name="Rudd S."/>
            <person name="Zaccaria P."/>
            <person name="Mewes H.-W."/>
            <person name="Mayer K.F.X."/>
            <person name="Kaul S."/>
            <person name="Town C.D."/>
            <person name="Koo H.L."/>
            <person name="Tallon L.J."/>
            <person name="Jenkins J."/>
            <person name="Rooney T."/>
            <person name="Rizzo M."/>
            <person name="Walts A."/>
            <person name="Utterback T."/>
            <person name="Fujii C.Y."/>
            <person name="Shea T.P."/>
            <person name="Creasy T.H."/>
            <person name="Haas B."/>
            <person name="Maiti R."/>
            <person name="Wu D."/>
            <person name="Peterson J."/>
            <person name="Van Aken S."/>
            <person name="Pai G."/>
            <person name="Militscher J."/>
            <person name="Sellers P."/>
            <person name="Gill J.E."/>
            <person name="Feldblyum T.V."/>
            <person name="Preuss D."/>
            <person name="Lin X."/>
            <person name="Nierman W.C."/>
            <person name="Salzberg S.L."/>
            <person name="White O."/>
            <person name="Venter J.C."/>
            <person name="Fraser C.M."/>
            <person name="Kaneko T."/>
            <person name="Nakamura Y."/>
            <person name="Sato S."/>
            <person name="Kato T."/>
            <person name="Asamizu E."/>
            <person name="Sasamoto S."/>
            <person name="Kimura T."/>
            <person name="Idesawa K."/>
            <person name="Kawashima K."/>
            <person name="Kishida Y."/>
            <person name="Kiyokawa C."/>
            <person name="Kohara M."/>
            <person name="Matsumoto M."/>
            <person name="Matsuno A."/>
            <person name="Muraki A."/>
            <person name="Nakayama S."/>
            <person name="Nakazaki N."/>
            <person name="Shinpo S."/>
            <person name="Takeuchi C."/>
            <person name="Wada T."/>
            <person name="Watanabe A."/>
            <person name="Yamada M."/>
            <person name="Yasuda M."/>
            <person name="Tabata S."/>
        </authorList>
    </citation>
    <scope>NUCLEOTIDE SEQUENCE [LARGE SCALE GENOMIC DNA]</scope>
    <source>
        <strain>cv. Columbia</strain>
    </source>
</reference>
<reference key="2">
    <citation type="journal article" date="2017" name="Plant J.">
        <title>Araport11: a complete reannotation of the Arabidopsis thaliana reference genome.</title>
        <authorList>
            <person name="Cheng C.Y."/>
            <person name="Krishnakumar V."/>
            <person name="Chan A.P."/>
            <person name="Thibaud-Nissen F."/>
            <person name="Schobel S."/>
            <person name="Town C.D."/>
        </authorList>
    </citation>
    <scope>GENOME REANNOTATION</scope>
    <source>
        <strain>cv. Columbia</strain>
    </source>
</reference>
<reference key="3">
    <citation type="journal article" date="2012" name="J. Exp. Bot.">
        <title>Coupled transport of Arabidopsis p24 proteins at the ER-Golgi interface.</title>
        <authorList>
            <person name="Montesinos J.C."/>
            <person name="Sturm S."/>
            <person name="Langhans M."/>
            <person name="Hillmer S."/>
            <person name="Marcote M.J."/>
            <person name="Robinson D.G."/>
            <person name="Aniento F."/>
        </authorList>
    </citation>
    <scope>GENE FAMILY</scope>
    <scope>NOMENCLATURE</scope>
</reference>
<reference key="4">
    <citation type="journal article" date="2012" name="Traffic">
        <title>Subclass-specific localization and trafficking of Arabidopsis p24 proteins in the ER-Golgi interface.</title>
        <authorList>
            <person name="Chen J."/>
            <person name="Qi X."/>
            <person name="Zheng H."/>
        </authorList>
    </citation>
    <scope>GENE FAMILY</scope>
    <scope>SUBCELLULAR LOCATION</scope>
    <scope>MUTAGENESIS OF TYR-210</scope>
    <scope>COILED-COIL DOMAIN</scope>
</reference>
<protein>
    <recommendedName>
        <fullName>Transmembrane emp24 domain-containing protein p24delta6</fullName>
    </recommendedName>
    <alternativeName>
        <fullName>p24 family protein delta1d</fullName>
        <shortName>p24delta1d</shortName>
    </alternativeName>
    <alternativeName>
        <fullName>p24 family protein delta6</fullName>
        <shortName>p24delta6</shortName>
    </alternativeName>
</protein>
<feature type="signal peptide" evidence="2">
    <location>
        <begin position="1"/>
        <end position="26"/>
    </location>
</feature>
<feature type="chain" id="PRO_0000419786" description="Transmembrane emp24 domain-containing protein p24delta6">
    <location>
        <begin position="27"/>
        <end position="217"/>
    </location>
</feature>
<feature type="topological domain" description="Lumenal" evidence="2">
    <location>
        <begin position="27"/>
        <end position="186"/>
    </location>
</feature>
<feature type="transmembrane region" description="Helical" evidence="2">
    <location>
        <begin position="187"/>
        <end position="207"/>
    </location>
</feature>
<feature type="topological domain" description="Cytoplasmic" evidence="2">
    <location>
        <begin position="208"/>
        <end position="217"/>
    </location>
</feature>
<feature type="domain" description="GOLD" evidence="3">
    <location>
        <begin position="36"/>
        <end position="152"/>
    </location>
</feature>
<feature type="coiled-coil region" evidence="2">
    <location>
        <begin position="138"/>
        <end position="160"/>
    </location>
</feature>
<feature type="short sequence motif" description="COPI vesicle coat-binding" evidence="1">
    <location>
        <begin position="210"/>
        <end position="217"/>
    </location>
</feature>
<feature type="short sequence motif" description="COPII vesicle coat-binding" evidence="1">
    <location>
        <begin position="210"/>
        <end position="211"/>
    </location>
</feature>
<feature type="modified residue" description="Omega-N-methylated arginine" evidence="1">
    <location>
        <position position="170"/>
    </location>
</feature>
<feature type="modified residue" description="Omega-N-methylated arginine" evidence="1">
    <location>
        <position position="175"/>
    </location>
</feature>
<feature type="glycosylation site" description="N-linked (GlcNAc...) asparagine" evidence="2">
    <location>
        <position position="84"/>
    </location>
</feature>
<feature type="glycosylation site" description="N-linked (GlcNAc...) asparagine" evidence="2">
    <location>
        <position position="116"/>
    </location>
</feature>
<feature type="mutagenesis site" description="Does not affect the subcellular location." evidence="4">
    <original>Y</original>
    <variation>F</variation>
    <location>
        <position position="210"/>
    </location>
</feature>
<sequence>MAISPVLFIGLIYLAGGGSLFPGVEAIWLTVPESGERCVYEEIQANVVVVLDYICIDDAFTQLGPTLDVRVTSPYGKELYKIANVTHGQAAFTTSESGTFLACLAMHHDQSHHSVNSSVIVSLDWKMGIRAKDWDSVAKKEKIEGVELEIRRSTEYASAIRANILYLRIREAYMREINEKTNTRVNQLGLMSLGVAIVVSISQVLYLKRYFLKKKLI</sequence>
<evidence type="ECO:0000250" key="1"/>
<evidence type="ECO:0000255" key="2"/>
<evidence type="ECO:0000255" key="3">
    <source>
        <dbReference type="PROSITE-ProRule" id="PRU00096"/>
    </source>
</evidence>
<evidence type="ECO:0000269" key="4">
    <source>
    </source>
</evidence>
<evidence type="ECO:0000305" key="5"/>